<evidence type="ECO:0000255" key="1"/>
<evidence type="ECO:0000255" key="2">
    <source>
        <dbReference type="PROSITE-ProRule" id="PRU00498"/>
    </source>
</evidence>
<evidence type="ECO:0000256" key="3">
    <source>
        <dbReference type="SAM" id="MobiDB-lite"/>
    </source>
</evidence>
<evidence type="ECO:0000269" key="4">
    <source>
    </source>
</evidence>
<evidence type="ECO:0000269" key="5">
    <source>
    </source>
</evidence>
<evidence type="ECO:0000269" key="6">
    <source>
    </source>
</evidence>
<evidence type="ECO:0000269" key="7">
    <source>
    </source>
</evidence>
<evidence type="ECO:0000303" key="8">
    <source>
    </source>
</evidence>
<evidence type="ECO:0000305" key="9"/>
<evidence type="ECO:0000305" key="10">
    <source>
    </source>
</evidence>
<evidence type="ECO:0000312" key="11">
    <source>
        <dbReference type="EMBL" id="AAC47118.1"/>
    </source>
</evidence>
<evidence type="ECO:0000312" key="12">
    <source>
        <dbReference type="EMBL" id="AAF56697.1"/>
    </source>
</evidence>
<evidence type="ECO:0000312" key="13">
    <source>
        <dbReference type="EMBL" id="AAM48401.1"/>
    </source>
</evidence>
<evidence type="ECO:0000312" key="14">
    <source>
        <dbReference type="EMBL" id="ADB25328.1"/>
    </source>
</evidence>
<evidence type="ECO:0000312" key="15">
    <source>
        <dbReference type="EMBL" id="AFA28426.1"/>
    </source>
</evidence>
<evidence type="ECO:0000312" key="16">
    <source>
        <dbReference type="FlyBase" id="FBgn0015737"/>
    </source>
</evidence>
<evidence type="ECO:0000312" key="17">
    <source>
        <dbReference type="Proteomes" id="UP000000803"/>
    </source>
</evidence>
<accession>Q9VB46</accession>
<accession>D2NUG9</accession>
<accession>Q24160</accession>
<accession>Q8MT56</accession>
<comment type="function">
    <text evidence="4 5 7">Transmembrane mucin that may be involved in cellular adhesion and the innate immune response (PubMed:12769978, PubMed:8662683). Membrane-tethered mucins are involved in many cell surface functions and form a physical barrier around cells to regulate cell-cell and/or cell-substrate interactions, and protect against pathogens or harmful extracellular conditions (PubMed:11164341, PubMed:12769978, PubMed:8662683). This mucin likely acts in hemocyte adhesion as it is released from hemocytes during coagulation and is also able to bind lipophorin particles which form part of the hemocyte coagulogen (PubMed:12769978). Able to induce expression of the antibacterial proteins in the presence of GalNAc-specific lectins and so probably also functions in the innate immune response (PubMed:8662683).</text>
</comment>
<comment type="subunit">
    <text evidence="6">Interacts with sturkopf.</text>
</comment>
<comment type="subcellular location">
    <subcellularLocation>
        <location evidence="7">Cell membrane</location>
        <topology evidence="1">Single-pass membrane protein</topology>
    </subcellularLocation>
    <text evidence="7">Detected on membrane of hemocytes.</text>
</comment>
<comment type="tissue specificity">
    <text evidence="4 7">Detected in ovaries (at protein level) (PubMed:11164341). In larvae, detected in the fat body, salivary glands, imaginal disks and gut (at protein level) (PubMed:11164341). In adults, expressed in the cardia, and in regions of the ventriculus including the area posterior to the cardia (PubMed:8662683). In females also expressed in follicle cells (PubMed:8662683).</text>
</comment>
<comment type="developmental stage">
    <text evidence="4 7">Detected throughout development and in adults (at protein level) (PubMed:11164341). Expressed in embryos, larvae and adults (PubMed:8662683).</text>
</comment>
<comment type="induction">
    <text evidence="4">By ecdysone; in embryonic cell lines.</text>
</comment>
<comment type="PTM">
    <text evidence="4">O-glycosylated. Glycosylated in the ovary of 4 day old females.</text>
</comment>
<comment type="PTM">
    <text evidence="7">Phosphorylated.</text>
</comment>
<comment type="similarity">
    <text evidence="9">Belongs to the strictosidine synthase family.</text>
</comment>
<comment type="sequence caution" evidence="9">
    <conflict type="frameshift">
        <sequence resource="EMBL-CDS" id="ADB25328"/>
    </conflict>
</comment>
<gene>
    <name evidence="16" type="primary">Hmu</name>
    <name evidence="12" type="synonym">Rbp5</name>
    <name evidence="12" type="synonym">rrm5</name>
    <name evidence="12" type="synonym">SPH210</name>
    <name evidence="16" type="ORF">CG3373</name>
</gene>
<keyword id="KW-1003">Cell membrane</keyword>
<keyword id="KW-0903">Direct protein sequencing</keyword>
<keyword id="KW-0325">Glycoprotein</keyword>
<keyword id="KW-0456">Lyase</keyword>
<keyword id="KW-0472">Membrane</keyword>
<keyword id="KW-0597">Phosphoprotein</keyword>
<keyword id="KW-1185">Reference proteome</keyword>
<keyword id="KW-0812">Transmembrane</keyword>
<keyword id="KW-1133">Transmembrane helix</keyword>
<dbReference type="EMBL" id="U42014">
    <property type="protein sequence ID" value="AAC47118.1"/>
    <property type="molecule type" value="mRNA"/>
</dbReference>
<dbReference type="EMBL" id="AE014297">
    <property type="protein sequence ID" value="AAF56697.1"/>
    <property type="molecule type" value="Genomic_DNA"/>
</dbReference>
<dbReference type="EMBL" id="AY118372">
    <property type="protein sequence ID" value="AAM48401.1"/>
    <property type="molecule type" value="mRNA"/>
</dbReference>
<dbReference type="EMBL" id="BT120112">
    <property type="protein sequence ID" value="ADB25328.1"/>
    <property type="status" value="ALT_FRAME"/>
    <property type="molecule type" value="mRNA"/>
</dbReference>
<dbReference type="EMBL" id="BT133185">
    <property type="protein sequence ID" value="AFA28426.1"/>
    <property type="molecule type" value="mRNA"/>
</dbReference>
<dbReference type="RefSeq" id="NP_477159.1">
    <property type="nucleotide sequence ID" value="NM_057811.4"/>
</dbReference>
<dbReference type="SMR" id="Q9VB46"/>
<dbReference type="FunCoup" id="Q9VB46">
    <property type="interactions" value="809"/>
</dbReference>
<dbReference type="IntAct" id="Q9VB46">
    <property type="interactions" value="1"/>
</dbReference>
<dbReference type="STRING" id="7227.FBpp0084534"/>
<dbReference type="GlyCosmos" id="Q9VB46">
    <property type="glycosylation" value="2 sites, No reported glycans"/>
</dbReference>
<dbReference type="GlyGen" id="Q9VB46">
    <property type="glycosylation" value="4 sites"/>
</dbReference>
<dbReference type="PaxDb" id="7227-FBpp0084534"/>
<dbReference type="DNASU" id="43294"/>
<dbReference type="EnsemblMetazoa" id="FBtr0085164">
    <property type="protein sequence ID" value="FBpp0084534"/>
    <property type="gene ID" value="FBgn0015737"/>
</dbReference>
<dbReference type="GeneID" id="43294"/>
<dbReference type="KEGG" id="dme:Dmel_CG3373"/>
<dbReference type="UCSC" id="CG3373-RA">
    <property type="organism name" value="d. melanogaster"/>
</dbReference>
<dbReference type="AGR" id="FB:FBgn0015737"/>
<dbReference type="CTD" id="43294"/>
<dbReference type="FlyBase" id="FBgn0015737">
    <property type="gene designation" value="Hmu"/>
</dbReference>
<dbReference type="VEuPathDB" id="VectorBase:FBgn0015737"/>
<dbReference type="eggNOG" id="KOG1520">
    <property type="taxonomic scope" value="Eukaryota"/>
</dbReference>
<dbReference type="GeneTree" id="ENSGT00440000039984"/>
<dbReference type="HOGENOM" id="CLU_023267_1_0_1"/>
<dbReference type="InParanoid" id="Q9VB46"/>
<dbReference type="OMA" id="RVRIMNF"/>
<dbReference type="OrthoDB" id="5307922at2759"/>
<dbReference type="PhylomeDB" id="Q9VB46"/>
<dbReference type="BioGRID-ORCS" id="43294">
    <property type="hits" value="0 hits in 1 CRISPR screen"/>
</dbReference>
<dbReference type="ChiTaRS" id="Hmu">
    <property type="organism name" value="fly"/>
</dbReference>
<dbReference type="GenomeRNAi" id="43294"/>
<dbReference type="PRO" id="PR:Q9VB46"/>
<dbReference type="Proteomes" id="UP000000803">
    <property type="component" value="Chromosome 3R"/>
</dbReference>
<dbReference type="Bgee" id="FBgn0015737">
    <property type="expression patterns" value="Expressed in crop (Drosophila) and 176 other cell types or tissues"/>
</dbReference>
<dbReference type="ExpressionAtlas" id="Q9VB46">
    <property type="expression patterns" value="baseline and differential"/>
</dbReference>
<dbReference type="GO" id="GO:0009986">
    <property type="term" value="C:cell surface"/>
    <property type="evidence" value="ECO:0000314"/>
    <property type="project" value="FlyBase"/>
</dbReference>
<dbReference type="GO" id="GO:0012505">
    <property type="term" value="C:endomembrane system"/>
    <property type="evidence" value="ECO:0007005"/>
    <property type="project" value="FlyBase"/>
</dbReference>
<dbReference type="GO" id="GO:0005886">
    <property type="term" value="C:plasma membrane"/>
    <property type="evidence" value="ECO:0007669"/>
    <property type="project" value="UniProtKB-SubCell"/>
</dbReference>
<dbReference type="GO" id="GO:0004064">
    <property type="term" value="F:arylesterase activity"/>
    <property type="evidence" value="ECO:0000250"/>
    <property type="project" value="FlyBase"/>
</dbReference>
<dbReference type="GO" id="GO:0016787">
    <property type="term" value="F:hydrolase activity"/>
    <property type="evidence" value="ECO:0000318"/>
    <property type="project" value="GO_Central"/>
</dbReference>
<dbReference type="GO" id="GO:0016829">
    <property type="term" value="F:lyase activity"/>
    <property type="evidence" value="ECO:0007669"/>
    <property type="project" value="UniProtKB-KW"/>
</dbReference>
<dbReference type="FunFam" id="2.120.10.30:FF:000065">
    <property type="entry name" value="Hemomucin"/>
    <property type="match status" value="1"/>
</dbReference>
<dbReference type="Gene3D" id="2.120.10.30">
    <property type="entry name" value="TolB, C-terminal domain"/>
    <property type="match status" value="1"/>
</dbReference>
<dbReference type="InterPro" id="IPR011042">
    <property type="entry name" value="6-blade_b-propeller_TolB-like"/>
</dbReference>
<dbReference type="InterPro" id="IPR018119">
    <property type="entry name" value="Strictosidine_synth_cons-reg"/>
</dbReference>
<dbReference type="PANTHER" id="PTHR10426:SF88">
    <property type="entry name" value="ADIPOCYTE PLASMA MEMBRANE-ASSOCIATED PROTEIN HEMOMUCIN-RELATED"/>
    <property type="match status" value="1"/>
</dbReference>
<dbReference type="PANTHER" id="PTHR10426">
    <property type="entry name" value="STRICTOSIDINE SYNTHASE-RELATED"/>
    <property type="match status" value="1"/>
</dbReference>
<dbReference type="Pfam" id="PF20067">
    <property type="entry name" value="SSL_N"/>
    <property type="match status" value="1"/>
</dbReference>
<dbReference type="Pfam" id="PF03088">
    <property type="entry name" value="Str_synth"/>
    <property type="match status" value="1"/>
</dbReference>
<dbReference type="PRINTS" id="PR01217">
    <property type="entry name" value="PRICHEXTENSN"/>
</dbReference>
<dbReference type="SUPFAM" id="SSF63829">
    <property type="entry name" value="Calcium-dependent phosphotriesterase"/>
    <property type="match status" value="1"/>
</dbReference>
<feature type="chain" id="PRO_0000454230" description="Adipocyte plasma membrane-associated protein Hemomucin">
    <location>
        <begin position="1"/>
        <end position="579"/>
    </location>
</feature>
<feature type="topological domain" description="Cytoplasmic" evidence="9">
    <location>
        <begin position="1"/>
        <end position="6"/>
    </location>
</feature>
<feature type="transmembrane region" description="Helical" evidence="1">
    <location>
        <begin position="7"/>
        <end position="29"/>
    </location>
</feature>
<feature type="topological domain" description="Extracellular" evidence="9">
    <location>
        <begin position="30"/>
        <end position="579"/>
    </location>
</feature>
<feature type="region of interest" description="Disordered" evidence="3">
    <location>
        <begin position="427"/>
        <end position="579"/>
    </location>
</feature>
<feature type="compositionally biased region" description="Low complexity" evidence="3">
    <location>
        <begin position="435"/>
        <end position="529"/>
    </location>
</feature>
<feature type="glycosylation site" description="N-linked (GlcNAc...) asparagine" evidence="2">
    <location>
        <position position="213"/>
    </location>
</feature>
<feature type="glycosylation site" description="N-linked (GlcNAc...) asparagine" evidence="2">
    <location>
        <position position="217"/>
    </location>
</feature>
<feature type="sequence conflict" description="In Ref. 5; ADB25328." evidence="9" ref="5">
    <original>G</original>
    <variation>A</variation>
    <location>
        <position position="207"/>
    </location>
</feature>
<feature type="sequence conflict" description="In Ref. 4; AAM48401." evidence="9" ref="4">
    <original>H</original>
    <variation>Q</variation>
    <location>
        <position position="255"/>
    </location>
</feature>
<feature type="sequence conflict" description="In Ref. 1; AAC47118." evidence="9" ref="1">
    <original>V</original>
    <variation>I</variation>
    <location>
        <position position="341"/>
    </location>
</feature>
<feature type="sequence conflict" description="In Ref. 1; AAC47118." evidence="9" ref="1">
    <original>V</original>
    <variation>I</variation>
    <location>
        <position position="383"/>
    </location>
</feature>
<feature type="sequence conflict" description="In Ref. 5; ADB25328." evidence="9" ref="5">
    <original>L</original>
    <variation>Q</variation>
    <location>
        <position position="387"/>
    </location>
</feature>
<feature type="sequence conflict" description="In Ref. 1; AAC47118." evidence="9" ref="1">
    <original>T</original>
    <variation>P</variation>
    <location>
        <position position="516"/>
    </location>
</feature>
<feature type="sequence conflict" description="In Ref. 1; AAC47118." evidence="9" ref="1">
    <original>T</original>
    <variation>TTPT</variation>
    <location>
        <position position="532"/>
    </location>
</feature>
<feature type="sequence conflict" description="In Ref. 1; AAC47118." evidence="9" ref="1">
    <original>D</original>
    <variation>E</variation>
    <location>
        <position position="554"/>
    </location>
</feature>
<name>APMAP_DROME</name>
<proteinExistence type="evidence at protein level"/>
<protein>
    <recommendedName>
        <fullName evidence="10">Adipocyte plasma membrane-associated protein Hemomucin</fullName>
    </recommendedName>
    <alternativeName>
        <fullName evidence="8">Protein Hemomucin</fullName>
    </alternativeName>
</protein>
<organism evidence="17">
    <name type="scientific">Drosophila melanogaster</name>
    <name type="common">Fruit fly</name>
    <dbReference type="NCBI Taxonomy" id="7227"/>
    <lineage>
        <taxon>Eukaryota</taxon>
        <taxon>Metazoa</taxon>
        <taxon>Ecdysozoa</taxon>
        <taxon>Arthropoda</taxon>
        <taxon>Hexapoda</taxon>
        <taxon>Insecta</taxon>
        <taxon>Pterygota</taxon>
        <taxon>Neoptera</taxon>
        <taxon>Endopterygota</taxon>
        <taxon>Diptera</taxon>
        <taxon>Brachycera</taxon>
        <taxon>Muscomorpha</taxon>
        <taxon>Ephydroidea</taxon>
        <taxon>Drosophilidae</taxon>
        <taxon>Drosophila</taxon>
        <taxon>Sophophora</taxon>
    </lineage>
</organism>
<sequence>MGLLYALRVRIMNFMIFFLLIILMPGLPPRTTFPFKDYIVTPPKDLKGALESNFHLEGAERLLEGRVYGPECLIARNNEIYTGIHGGEVIKLTSNHVTHVTKIGQPCEDIYEESRCGRPLGLAFDTQGNNLIIADAYYGLWQVDLGTNKKTLLVSPAQELAGKSINRPAKIFNGVTVSKEGDVYWTDSSSDFTIEDLVFASFANPSGRLFKYNRSKNVSEVLLDELAFANGLALSPNEDFIVVAETGAMRLTKYHLKGAKAGQSEVFVDGLPGLPDNLTPDAEGIWVPLVQSADSEHPNGFTLFTRFPSVRLFLARMLALFELPFRYLNSVYPNKFSQRFVHFVGHMESITVLAPKRTTVVRVDWNGNIVGSLHGFDKSAATVSHVLEFQDFLFLGSPTNQYLARVKSPKAKQPTLKVRNVRVEGEGLEASIGVPPSKATPKPKAAPSTTTPKPTTTTTTTTPKPTTKTTTTTTTPKPTTTTTTKKPTTTTTTTTTTPKPTTTKPPTAKPSTTTTTTTTPKPTTTTTPTTPTPEPSKPKVKRTVPEKPAPVEEDIPSDTQPPKKEKLKVINKQGVNVEL</sequence>
<reference evidence="11" key="1">
    <citation type="journal article" date="1996" name="J. Biol. Chem.">
        <title>Helix pomatia lectin, an inducer of Drosophila immune response, binds to hemomucin, a novel surface mucin.</title>
        <authorList>
            <person name="Theopold U."/>
            <person name="Samakovlis C."/>
            <person name="Erdjument-Bromage H."/>
            <person name="Dillon N."/>
            <person name="Axelsson B."/>
            <person name="Schmidt O."/>
            <person name="Tempst P."/>
            <person name="Hultmark D."/>
        </authorList>
    </citation>
    <scope>NUCLEOTIDE SEQUENCE [MRNA]</scope>
    <scope>PROTEIN SEQUENCE OF 24-42; 49-60; 77-91; 103-115; 151-163; 171-205; 216-229; 261-283; 317-324; 340-356 AND 363-377</scope>
    <scope>FUNCTION</scope>
    <scope>SUBCELLULAR LOCATION</scope>
    <scope>TISSUE SPECIFICITY</scope>
    <scope>DEVELOPMENTAL STAGE</scope>
    <scope>PHOSPHORYLATION</scope>
    <source>
        <strain evidence="11">Canton-S</strain>
        <tissue evidence="11">Hemocyte</tissue>
    </source>
</reference>
<reference evidence="17" key="2">
    <citation type="journal article" date="2000" name="Science">
        <title>The genome sequence of Drosophila melanogaster.</title>
        <authorList>
            <person name="Adams M.D."/>
            <person name="Celniker S.E."/>
            <person name="Holt R.A."/>
            <person name="Evans C.A."/>
            <person name="Gocayne J.D."/>
            <person name="Amanatides P.G."/>
            <person name="Scherer S.E."/>
            <person name="Li P.W."/>
            <person name="Hoskins R.A."/>
            <person name="Galle R.F."/>
            <person name="George R.A."/>
            <person name="Lewis S.E."/>
            <person name="Richards S."/>
            <person name="Ashburner M."/>
            <person name="Henderson S.N."/>
            <person name="Sutton G.G."/>
            <person name="Wortman J.R."/>
            <person name="Yandell M.D."/>
            <person name="Zhang Q."/>
            <person name="Chen L.X."/>
            <person name="Brandon R.C."/>
            <person name="Rogers Y.-H.C."/>
            <person name="Blazej R.G."/>
            <person name="Champe M."/>
            <person name="Pfeiffer B.D."/>
            <person name="Wan K.H."/>
            <person name="Doyle C."/>
            <person name="Baxter E.G."/>
            <person name="Helt G."/>
            <person name="Nelson C.R."/>
            <person name="Miklos G.L.G."/>
            <person name="Abril J.F."/>
            <person name="Agbayani A."/>
            <person name="An H.-J."/>
            <person name="Andrews-Pfannkoch C."/>
            <person name="Baldwin D."/>
            <person name="Ballew R.M."/>
            <person name="Basu A."/>
            <person name="Baxendale J."/>
            <person name="Bayraktaroglu L."/>
            <person name="Beasley E.M."/>
            <person name="Beeson K.Y."/>
            <person name="Benos P.V."/>
            <person name="Berman B.P."/>
            <person name="Bhandari D."/>
            <person name="Bolshakov S."/>
            <person name="Borkova D."/>
            <person name="Botchan M.R."/>
            <person name="Bouck J."/>
            <person name="Brokstein P."/>
            <person name="Brottier P."/>
            <person name="Burtis K.C."/>
            <person name="Busam D.A."/>
            <person name="Butler H."/>
            <person name="Cadieu E."/>
            <person name="Center A."/>
            <person name="Chandra I."/>
            <person name="Cherry J.M."/>
            <person name="Cawley S."/>
            <person name="Dahlke C."/>
            <person name="Davenport L.B."/>
            <person name="Davies P."/>
            <person name="de Pablos B."/>
            <person name="Delcher A."/>
            <person name="Deng Z."/>
            <person name="Mays A.D."/>
            <person name="Dew I."/>
            <person name="Dietz S.M."/>
            <person name="Dodson K."/>
            <person name="Doup L.E."/>
            <person name="Downes M."/>
            <person name="Dugan-Rocha S."/>
            <person name="Dunkov B.C."/>
            <person name="Dunn P."/>
            <person name="Durbin K.J."/>
            <person name="Evangelista C.C."/>
            <person name="Ferraz C."/>
            <person name="Ferriera S."/>
            <person name="Fleischmann W."/>
            <person name="Fosler C."/>
            <person name="Gabrielian A.E."/>
            <person name="Garg N.S."/>
            <person name="Gelbart W.M."/>
            <person name="Glasser K."/>
            <person name="Glodek A."/>
            <person name="Gong F."/>
            <person name="Gorrell J.H."/>
            <person name="Gu Z."/>
            <person name="Guan P."/>
            <person name="Harris M."/>
            <person name="Harris N.L."/>
            <person name="Harvey D.A."/>
            <person name="Heiman T.J."/>
            <person name="Hernandez J.R."/>
            <person name="Houck J."/>
            <person name="Hostin D."/>
            <person name="Houston K.A."/>
            <person name="Howland T.J."/>
            <person name="Wei M.-H."/>
            <person name="Ibegwam C."/>
            <person name="Jalali M."/>
            <person name="Kalush F."/>
            <person name="Karpen G.H."/>
            <person name="Ke Z."/>
            <person name="Kennison J.A."/>
            <person name="Ketchum K.A."/>
            <person name="Kimmel B.E."/>
            <person name="Kodira C.D."/>
            <person name="Kraft C.L."/>
            <person name="Kravitz S."/>
            <person name="Kulp D."/>
            <person name="Lai Z."/>
            <person name="Lasko P."/>
            <person name="Lei Y."/>
            <person name="Levitsky A.A."/>
            <person name="Li J.H."/>
            <person name="Li Z."/>
            <person name="Liang Y."/>
            <person name="Lin X."/>
            <person name="Liu X."/>
            <person name="Mattei B."/>
            <person name="McIntosh T.C."/>
            <person name="McLeod M.P."/>
            <person name="McPherson D."/>
            <person name="Merkulov G."/>
            <person name="Milshina N.V."/>
            <person name="Mobarry C."/>
            <person name="Morris J."/>
            <person name="Moshrefi A."/>
            <person name="Mount S.M."/>
            <person name="Moy M."/>
            <person name="Murphy B."/>
            <person name="Murphy L."/>
            <person name="Muzny D.M."/>
            <person name="Nelson D.L."/>
            <person name="Nelson D.R."/>
            <person name="Nelson K.A."/>
            <person name="Nixon K."/>
            <person name="Nusskern D.R."/>
            <person name="Pacleb J.M."/>
            <person name="Palazzolo M."/>
            <person name="Pittman G.S."/>
            <person name="Pan S."/>
            <person name="Pollard J."/>
            <person name="Puri V."/>
            <person name="Reese M.G."/>
            <person name="Reinert K."/>
            <person name="Remington K."/>
            <person name="Saunders R.D.C."/>
            <person name="Scheeler F."/>
            <person name="Shen H."/>
            <person name="Shue B.C."/>
            <person name="Siden-Kiamos I."/>
            <person name="Simpson M."/>
            <person name="Skupski M.P."/>
            <person name="Smith T.J."/>
            <person name="Spier E."/>
            <person name="Spradling A.C."/>
            <person name="Stapleton M."/>
            <person name="Strong R."/>
            <person name="Sun E."/>
            <person name="Svirskas R."/>
            <person name="Tector C."/>
            <person name="Turner R."/>
            <person name="Venter E."/>
            <person name="Wang A.H."/>
            <person name="Wang X."/>
            <person name="Wang Z.-Y."/>
            <person name="Wassarman D.A."/>
            <person name="Weinstock G.M."/>
            <person name="Weissenbach J."/>
            <person name="Williams S.M."/>
            <person name="Woodage T."/>
            <person name="Worley K.C."/>
            <person name="Wu D."/>
            <person name="Yang S."/>
            <person name="Yao Q.A."/>
            <person name="Ye J."/>
            <person name="Yeh R.-F."/>
            <person name="Zaveri J.S."/>
            <person name="Zhan M."/>
            <person name="Zhang G."/>
            <person name="Zhao Q."/>
            <person name="Zheng L."/>
            <person name="Zheng X.H."/>
            <person name="Zhong F.N."/>
            <person name="Zhong W."/>
            <person name="Zhou X."/>
            <person name="Zhu S.C."/>
            <person name="Zhu X."/>
            <person name="Smith H.O."/>
            <person name="Gibbs R.A."/>
            <person name="Myers E.W."/>
            <person name="Rubin G.M."/>
            <person name="Venter J.C."/>
        </authorList>
    </citation>
    <scope>NUCLEOTIDE SEQUENCE [LARGE SCALE GENOMIC DNA]</scope>
    <source>
        <strain evidence="17">Berkeley</strain>
    </source>
</reference>
<reference evidence="17" key="3">
    <citation type="journal article" date="2002" name="Genome Biol.">
        <title>Annotation of the Drosophila melanogaster euchromatic genome: a systematic review.</title>
        <authorList>
            <person name="Misra S."/>
            <person name="Crosby M.A."/>
            <person name="Mungall C.J."/>
            <person name="Matthews B.B."/>
            <person name="Campbell K.S."/>
            <person name="Hradecky P."/>
            <person name="Huang Y."/>
            <person name="Kaminker J.S."/>
            <person name="Millburn G.H."/>
            <person name="Prochnik S.E."/>
            <person name="Smith C.D."/>
            <person name="Tupy J.L."/>
            <person name="Whitfield E.J."/>
            <person name="Bayraktaroglu L."/>
            <person name="Berman B.P."/>
            <person name="Bettencourt B.R."/>
            <person name="Celniker S.E."/>
            <person name="de Grey A.D.N.J."/>
            <person name="Drysdale R.A."/>
            <person name="Harris N.L."/>
            <person name="Richter J."/>
            <person name="Russo S."/>
            <person name="Schroeder A.J."/>
            <person name="Shu S.Q."/>
            <person name="Stapleton M."/>
            <person name="Yamada C."/>
            <person name="Ashburner M."/>
            <person name="Gelbart W.M."/>
            <person name="Rubin G.M."/>
            <person name="Lewis S.E."/>
        </authorList>
    </citation>
    <scope>GENOME REANNOTATION</scope>
    <source>
        <strain evidence="17">Berkeley</strain>
    </source>
</reference>
<reference evidence="13" key="4">
    <citation type="journal article" date="2002" name="Genome Biol.">
        <title>A Drosophila full-length cDNA resource.</title>
        <authorList>
            <person name="Stapleton M."/>
            <person name="Carlson J.W."/>
            <person name="Brokstein P."/>
            <person name="Yu C."/>
            <person name="Champe M."/>
            <person name="George R.A."/>
            <person name="Guarin H."/>
            <person name="Kronmiller B."/>
            <person name="Pacleb J.M."/>
            <person name="Park S."/>
            <person name="Wan K.H."/>
            <person name="Rubin G.M."/>
            <person name="Celniker S.E."/>
        </authorList>
    </citation>
    <scope>NUCLEOTIDE SEQUENCE [LARGE SCALE MRNA]</scope>
    <source>
        <strain evidence="13">Berkeley</strain>
        <tissue evidence="13">Embryo</tissue>
    </source>
</reference>
<reference evidence="14 15" key="5">
    <citation type="submission" date="2012-02" db="EMBL/GenBank/DDBJ databases">
        <authorList>
            <person name="Carlson J."/>
            <person name="Booth B."/>
            <person name="Frise E."/>
            <person name="Park S."/>
            <person name="Wan K."/>
            <person name="Yu C."/>
            <person name="Celniker S."/>
        </authorList>
    </citation>
    <scope>NUCLEOTIDE SEQUENCE [MRNA]</scope>
</reference>
<reference evidence="9" key="6">
    <citation type="journal article" date="1997" name="J. Insect Physiol.">
        <title>Helix pomatia lectin and annexin V, two molecular probes for insect microparticles: possible involvement in hemolymph coagulation.</title>
        <authorList>
            <person name="Schmidt O."/>
            <person name="Theopold U."/>
        </authorList>
    </citation>
    <scope>FUNCTION</scope>
</reference>
<reference evidence="9" key="7">
    <citation type="journal article" date="2001" name="Insect Biochem. Mol. Biol.">
        <title>Changes in glycosylation during Drosophila development. The influence of ecdysone on hemomucin isoforms.</title>
        <authorList>
            <person name="Theopold U."/>
            <person name="Dorian C."/>
            <person name="Schmidt O."/>
        </authorList>
    </citation>
    <scope>FUNCTION</scope>
    <scope>TISSUE SPECIFICITY</scope>
    <scope>DEVELOPMENTAL STAGE</scope>
    <scope>INDUCTION BY ECDYSONE</scope>
    <scope>GLYCOSYLATION</scope>
</reference>
<reference evidence="9" key="8">
    <citation type="journal article" date="2019" name="Cell Rep.">
        <title>Control of Drosophila Growth and Survival by the Lipid Droplet-Associated Protein CG9186/Sturkopf.</title>
        <authorList>
            <person name="Werthebach M."/>
            <person name="Stewart F.A."/>
            <person name="Gahlen A."/>
            <person name="Mettler-Altmann T."/>
            <person name="Akhtar I."/>
            <person name="Maas-Enriquez K."/>
            <person name="Droste A."/>
            <person name="Eichmann T.O."/>
            <person name="Poschmann G."/>
            <person name="Stuehler K."/>
            <person name="Beller M."/>
        </authorList>
    </citation>
    <scope>INTERACTION WITH STURKOPF</scope>
</reference>